<name>BIOB_METPB</name>
<feature type="chain" id="PRO_0000381468" description="Biotin synthase">
    <location>
        <begin position="1"/>
        <end position="341"/>
    </location>
</feature>
<feature type="domain" description="Radical SAM core" evidence="2">
    <location>
        <begin position="56"/>
        <end position="285"/>
    </location>
</feature>
<feature type="binding site" evidence="1">
    <location>
        <position position="71"/>
    </location>
    <ligand>
        <name>[4Fe-4S] cluster</name>
        <dbReference type="ChEBI" id="CHEBI:49883"/>
        <note>4Fe-4S-S-AdoMet</note>
    </ligand>
</feature>
<feature type="binding site" evidence="1">
    <location>
        <position position="75"/>
    </location>
    <ligand>
        <name>[4Fe-4S] cluster</name>
        <dbReference type="ChEBI" id="CHEBI:49883"/>
        <note>4Fe-4S-S-AdoMet</note>
    </ligand>
</feature>
<feature type="binding site" evidence="1">
    <location>
        <position position="78"/>
    </location>
    <ligand>
        <name>[4Fe-4S] cluster</name>
        <dbReference type="ChEBI" id="CHEBI:49883"/>
        <note>4Fe-4S-S-AdoMet</note>
    </ligand>
</feature>
<feature type="binding site" evidence="1">
    <location>
        <position position="116"/>
    </location>
    <ligand>
        <name>[2Fe-2S] cluster</name>
        <dbReference type="ChEBI" id="CHEBI:190135"/>
    </ligand>
</feature>
<feature type="binding site" evidence="1">
    <location>
        <position position="148"/>
    </location>
    <ligand>
        <name>[2Fe-2S] cluster</name>
        <dbReference type="ChEBI" id="CHEBI:190135"/>
    </ligand>
</feature>
<feature type="binding site" evidence="1">
    <location>
        <position position="208"/>
    </location>
    <ligand>
        <name>[2Fe-2S] cluster</name>
        <dbReference type="ChEBI" id="CHEBI:190135"/>
    </ligand>
</feature>
<feature type="binding site" evidence="1">
    <location>
        <position position="280"/>
    </location>
    <ligand>
        <name>[2Fe-2S] cluster</name>
        <dbReference type="ChEBI" id="CHEBI:190135"/>
    </ligand>
</feature>
<accession>B1ZFX7</accession>
<gene>
    <name evidence="1" type="primary">bioB</name>
    <name type="ordered locus">Mpop_4487</name>
</gene>
<proteinExistence type="inferred from homology"/>
<evidence type="ECO:0000255" key="1">
    <source>
        <dbReference type="HAMAP-Rule" id="MF_01694"/>
    </source>
</evidence>
<evidence type="ECO:0000255" key="2">
    <source>
        <dbReference type="PROSITE-ProRule" id="PRU01266"/>
    </source>
</evidence>
<dbReference type="EC" id="2.8.1.6" evidence="1"/>
<dbReference type="EMBL" id="CP001029">
    <property type="protein sequence ID" value="ACB82586.1"/>
    <property type="molecule type" value="Genomic_DNA"/>
</dbReference>
<dbReference type="RefSeq" id="WP_012456190.1">
    <property type="nucleotide sequence ID" value="NC_010725.1"/>
</dbReference>
<dbReference type="SMR" id="B1ZFX7"/>
<dbReference type="STRING" id="441620.Mpop_4487"/>
<dbReference type="KEGG" id="mpo:Mpop_4487"/>
<dbReference type="eggNOG" id="COG0502">
    <property type="taxonomic scope" value="Bacteria"/>
</dbReference>
<dbReference type="HOGENOM" id="CLU_033172_1_2_5"/>
<dbReference type="OrthoDB" id="9786826at2"/>
<dbReference type="UniPathway" id="UPA00078">
    <property type="reaction ID" value="UER00162"/>
</dbReference>
<dbReference type="Proteomes" id="UP000007136">
    <property type="component" value="Chromosome"/>
</dbReference>
<dbReference type="GO" id="GO:0051537">
    <property type="term" value="F:2 iron, 2 sulfur cluster binding"/>
    <property type="evidence" value="ECO:0007669"/>
    <property type="project" value="UniProtKB-KW"/>
</dbReference>
<dbReference type="GO" id="GO:0051539">
    <property type="term" value="F:4 iron, 4 sulfur cluster binding"/>
    <property type="evidence" value="ECO:0007669"/>
    <property type="project" value="UniProtKB-KW"/>
</dbReference>
<dbReference type="GO" id="GO:0004076">
    <property type="term" value="F:biotin synthase activity"/>
    <property type="evidence" value="ECO:0007669"/>
    <property type="project" value="UniProtKB-UniRule"/>
</dbReference>
<dbReference type="GO" id="GO:0005506">
    <property type="term" value="F:iron ion binding"/>
    <property type="evidence" value="ECO:0007669"/>
    <property type="project" value="UniProtKB-UniRule"/>
</dbReference>
<dbReference type="GO" id="GO:0009102">
    <property type="term" value="P:biotin biosynthetic process"/>
    <property type="evidence" value="ECO:0007669"/>
    <property type="project" value="UniProtKB-UniRule"/>
</dbReference>
<dbReference type="CDD" id="cd01335">
    <property type="entry name" value="Radical_SAM"/>
    <property type="match status" value="1"/>
</dbReference>
<dbReference type="Gene3D" id="3.20.20.70">
    <property type="entry name" value="Aldolase class I"/>
    <property type="match status" value="1"/>
</dbReference>
<dbReference type="HAMAP" id="MF_01694">
    <property type="entry name" value="BioB"/>
    <property type="match status" value="1"/>
</dbReference>
<dbReference type="InterPro" id="IPR013785">
    <property type="entry name" value="Aldolase_TIM"/>
</dbReference>
<dbReference type="InterPro" id="IPR010722">
    <property type="entry name" value="BATS_dom"/>
</dbReference>
<dbReference type="InterPro" id="IPR002684">
    <property type="entry name" value="Biotin_synth/BioAB"/>
</dbReference>
<dbReference type="InterPro" id="IPR024177">
    <property type="entry name" value="Biotin_synthase"/>
</dbReference>
<dbReference type="InterPro" id="IPR006638">
    <property type="entry name" value="Elp3/MiaA/NifB-like_rSAM"/>
</dbReference>
<dbReference type="InterPro" id="IPR007197">
    <property type="entry name" value="rSAM"/>
</dbReference>
<dbReference type="NCBIfam" id="TIGR00433">
    <property type="entry name" value="bioB"/>
    <property type="match status" value="1"/>
</dbReference>
<dbReference type="PANTHER" id="PTHR22976">
    <property type="entry name" value="BIOTIN SYNTHASE"/>
    <property type="match status" value="1"/>
</dbReference>
<dbReference type="PANTHER" id="PTHR22976:SF2">
    <property type="entry name" value="BIOTIN SYNTHASE, MITOCHONDRIAL"/>
    <property type="match status" value="1"/>
</dbReference>
<dbReference type="Pfam" id="PF06968">
    <property type="entry name" value="BATS"/>
    <property type="match status" value="1"/>
</dbReference>
<dbReference type="Pfam" id="PF04055">
    <property type="entry name" value="Radical_SAM"/>
    <property type="match status" value="1"/>
</dbReference>
<dbReference type="PIRSF" id="PIRSF001619">
    <property type="entry name" value="Biotin_synth"/>
    <property type="match status" value="1"/>
</dbReference>
<dbReference type="SFLD" id="SFLDF00272">
    <property type="entry name" value="biotin_synthase"/>
    <property type="match status" value="1"/>
</dbReference>
<dbReference type="SFLD" id="SFLDS00029">
    <property type="entry name" value="Radical_SAM"/>
    <property type="match status" value="1"/>
</dbReference>
<dbReference type="SMART" id="SM00876">
    <property type="entry name" value="BATS"/>
    <property type="match status" value="1"/>
</dbReference>
<dbReference type="SMART" id="SM00729">
    <property type="entry name" value="Elp3"/>
    <property type="match status" value="1"/>
</dbReference>
<dbReference type="SUPFAM" id="SSF102114">
    <property type="entry name" value="Radical SAM enzymes"/>
    <property type="match status" value="1"/>
</dbReference>
<dbReference type="PROSITE" id="PS51918">
    <property type="entry name" value="RADICAL_SAM"/>
    <property type="match status" value="1"/>
</dbReference>
<reference key="1">
    <citation type="submission" date="2008-04" db="EMBL/GenBank/DDBJ databases">
        <title>Complete sequence of chromosome of Methylobacterium populi BJ001.</title>
        <authorList>
            <consortium name="US DOE Joint Genome Institute"/>
            <person name="Copeland A."/>
            <person name="Lucas S."/>
            <person name="Lapidus A."/>
            <person name="Glavina del Rio T."/>
            <person name="Dalin E."/>
            <person name="Tice H."/>
            <person name="Bruce D."/>
            <person name="Goodwin L."/>
            <person name="Pitluck S."/>
            <person name="Chertkov O."/>
            <person name="Brettin T."/>
            <person name="Detter J.C."/>
            <person name="Han C."/>
            <person name="Kuske C.R."/>
            <person name="Schmutz J."/>
            <person name="Larimer F."/>
            <person name="Land M."/>
            <person name="Hauser L."/>
            <person name="Kyrpides N."/>
            <person name="Mikhailova N."/>
            <person name="Marx C."/>
            <person name="Richardson P."/>
        </authorList>
    </citation>
    <scope>NUCLEOTIDE SEQUENCE [LARGE SCALE GENOMIC DNA]</scope>
    <source>
        <strain>ATCC BAA-705 / NCIMB 13946 / BJ001</strain>
    </source>
</reference>
<organism>
    <name type="scientific">Methylorubrum populi (strain ATCC BAA-705 / NCIMB 13946 / BJ001)</name>
    <name type="common">Methylobacterium populi</name>
    <dbReference type="NCBI Taxonomy" id="441620"/>
    <lineage>
        <taxon>Bacteria</taxon>
        <taxon>Pseudomonadati</taxon>
        <taxon>Pseudomonadota</taxon>
        <taxon>Alphaproteobacteria</taxon>
        <taxon>Hyphomicrobiales</taxon>
        <taxon>Methylobacteriaceae</taxon>
        <taxon>Methylorubrum</taxon>
    </lineage>
</organism>
<sequence length="341" mass="36807">MSDTVVSLASSQAPDAVRQDIRHDWTLAEIQAIHDMPLLDLVHRAGTVHRAHNDPADIQRAALLSIKTGGCPEDCAYCPQSAHHKGANLPRERLMPVDAVLKEAAAAKANGAHRFCMGAAWRKPKDGPEFDAVLEMVRGVRGLGMEACVTLGMLTQSQAQRLAEAGLTSYNHNLDTGPEFYGDIISTRTYDDRLQTLEHVRQAGIGVCCGGIVGMGERVRDRAEMLLVLANHAPHPESVPINALVAVEGTPLEDRPPIDPLDLVRMCATARIVMPKARVRLSAGRKSLTREAQILCFLAGANSIFYGERLLTTANNEADADAELLRDIGVPVPEVTLAAAE</sequence>
<protein>
    <recommendedName>
        <fullName evidence="1">Biotin synthase</fullName>
        <ecNumber evidence="1">2.8.1.6</ecNumber>
    </recommendedName>
</protein>
<comment type="function">
    <text evidence="1">Catalyzes the conversion of dethiobiotin (DTB) to biotin by the insertion of a sulfur atom into dethiobiotin via a radical-based mechanism.</text>
</comment>
<comment type="catalytic activity">
    <reaction evidence="1">
        <text>(4R,5S)-dethiobiotin + (sulfur carrier)-SH + 2 reduced [2Fe-2S]-[ferredoxin] + 2 S-adenosyl-L-methionine = (sulfur carrier)-H + biotin + 2 5'-deoxyadenosine + 2 L-methionine + 2 oxidized [2Fe-2S]-[ferredoxin]</text>
        <dbReference type="Rhea" id="RHEA:22060"/>
        <dbReference type="Rhea" id="RHEA-COMP:10000"/>
        <dbReference type="Rhea" id="RHEA-COMP:10001"/>
        <dbReference type="Rhea" id="RHEA-COMP:14737"/>
        <dbReference type="Rhea" id="RHEA-COMP:14739"/>
        <dbReference type="ChEBI" id="CHEBI:17319"/>
        <dbReference type="ChEBI" id="CHEBI:29917"/>
        <dbReference type="ChEBI" id="CHEBI:33737"/>
        <dbReference type="ChEBI" id="CHEBI:33738"/>
        <dbReference type="ChEBI" id="CHEBI:57586"/>
        <dbReference type="ChEBI" id="CHEBI:57844"/>
        <dbReference type="ChEBI" id="CHEBI:59789"/>
        <dbReference type="ChEBI" id="CHEBI:64428"/>
        <dbReference type="ChEBI" id="CHEBI:149473"/>
        <dbReference type="EC" id="2.8.1.6"/>
    </reaction>
</comment>
<comment type="cofactor">
    <cofactor evidence="1">
        <name>[4Fe-4S] cluster</name>
        <dbReference type="ChEBI" id="CHEBI:49883"/>
    </cofactor>
    <text evidence="1">Binds 1 [4Fe-4S] cluster. The cluster is coordinated with 3 cysteines and an exchangeable S-adenosyl-L-methionine.</text>
</comment>
<comment type="cofactor">
    <cofactor evidence="1">
        <name>[2Fe-2S] cluster</name>
        <dbReference type="ChEBI" id="CHEBI:190135"/>
    </cofactor>
    <text evidence="1">Binds 1 [2Fe-2S] cluster. The cluster is coordinated with 3 cysteines and 1 arginine.</text>
</comment>
<comment type="pathway">
    <text evidence="1">Cofactor biosynthesis; biotin biosynthesis; biotin from 7,8-diaminononanoate: step 2/2.</text>
</comment>
<comment type="subunit">
    <text evidence="1">Homodimer.</text>
</comment>
<comment type="similarity">
    <text evidence="1">Belongs to the radical SAM superfamily. Biotin synthase family.</text>
</comment>
<keyword id="KW-0001">2Fe-2S</keyword>
<keyword id="KW-0004">4Fe-4S</keyword>
<keyword id="KW-0093">Biotin biosynthesis</keyword>
<keyword id="KW-0408">Iron</keyword>
<keyword id="KW-0411">Iron-sulfur</keyword>
<keyword id="KW-0479">Metal-binding</keyword>
<keyword id="KW-0949">S-adenosyl-L-methionine</keyword>
<keyword id="KW-0808">Transferase</keyword>